<protein>
    <recommendedName>
        <fullName>Reaction center protein M chain</fullName>
    </recommendedName>
    <alternativeName>
        <fullName>Photosynthetic reaction center M subunit</fullName>
    </alternativeName>
</protein>
<keyword id="KW-0002">3D-structure</keyword>
<keyword id="KW-0076">Bacteriochlorophyll</keyword>
<keyword id="KW-0148">Chlorophyll</keyword>
<keyword id="KW-0157">Chromophore</keyword>
<keyword id="KW-0249">Electron transport</keyword>
<keyword id="KW-0408">Iron</keyword>
<keyword id="KW-0460">Magnesium</keyword>
<keyword id="KW-0472">Membrane</keyword>
<keyword id="KW-0479">Metal-binding</keyword>
<keyword id="KW-0602">Photosynthesis</keyword>
<keyword id="KW-0674">Reaction center</keyword>
<keyword id="KW-0812">Transmembrane</keyword>
<keyword id="KW-1133">Transmembrane helix</keyword>
<keyword id="KW-0813">Transport</keyword>
<accession>P0C0Y9</accession>
<accession>P02953</accession>
<accession>Q9RFB8</accession>
<dbReference type="EMBL" id="K00827">
    <property type="protein sequence ID" value="AAA26179.1"/>
    <property type="molecule type" value="Genomic_DNA"/>
</dbReference>
<dbReference type="EMBL" id="X63405">
    <property type="protein sequence ID" value="CAA45001.1"/>
    <property type="molecule type" value="Genomic_DNA"/>
</dbReference>
<dbReference type="EMBL" id="X63404">
    <property type="protein sequence ID" value="CAA45000.1"/>
    <property type="molecule type" value="Genomic_DNA"/>
</dbReference>
<dbReference type="EMBL" id="M10206">
    <property type="protein sequence ID" value="AAA26178.1"/>
    <property type="molecule type" value="Genomic_DNA"/>
</dbReference>
<dbReference type="PIR" id="A03456">
    <property type="entry name" value="WNRFMS"/>
</dbReference>
<dbReference type="PIR" id="S24213">
    <property type="entry name" value="S24213"/>
</dbReference>
<dbReference type="RefSeq" id="WP_002720420.1">
    <property type="nucleotide sequence ID" value="NZ_WTFI01000042.1"/>
</dbReference>
<dbReference type="PDB" id="1AIG">
    <property type="method" value="X-ray"/>
    <property type="resolution" value="2.60 A"/>
    <property type="chains" value="M/O=2-308"/>
</dbReference>
<dbReference type="PDB" id="1AIJ">
    <property type="method" value="X-ray"/>
    <property type="resolution" value="2.20 A"/>
    <property type="chains" value="M/S=2-308"/>
</dbReference>
<dbReference type="PDB" id="1DS8">
    <property type="method" value="X-ray"/>
    <property type="resolution" value="2.50 A"/>
    <property type="chains" value="M/S=2-307"/>
</dbReference>
<dbReference type="PDB" id="1DV3">
    <property type="method" value="X-ray"/>
    <property type="resolution" value="2.50 A"/>
    <property type="chains" value="M/S=2-307"/>
</dbReference>
<dbReference type="PDB" id="1DV6">
    <property type="method" value="X-ray"/>
    <property type="resolution" value="2.50 A"/>
    <property type="chains" value="M/S=2-307"/>
</dbReference>
<dbReference type="PDB" id="1E14">
    <property type="method" value="X-ray"/>
    <property type="resolution" value="2.70 A"/>
    <property type="chains" value="M=2-308"/>
</dbReference>
<dbReference type="PDB" id="1E6D">
    <property type="method" value="X-ray"/>
    <property type="resolution" value="2.30 A"/>
    <property type="chains" value="M=2-308"/>
</dbReference>
<dbReference type="PDB" id="1F6N">
    <property type="method" value="X-ray"/>
    <property type="resolution" value="2.80 A"/>
    <property type="chains" value="M=2-308"/>
</dbReference>
<dbReference type="PDB" id="1FNP">
    <property type="method" value="X-ray"/>
    <property type="resolution" value="2.60 A"/>
    <property type="chains" value="M=2-308"/>
</dbReference>
<dbReference type="PDB" id="1FNQ">
    <property type="method" value="X-ray"/>
    <property type="resolution" value="2.60 A"/>
    <property type="chains" value="M=2-308"/>
</dbReference>
<dbReference type="PDB" id="1JGW">
    <property type="method" value="X-ray"/>
    <property type="resolution" value="2.80 A"/>
    <property type="chains" value="M=2-308"/>
</dbReference>
<dbReference type="PDB" id="1JGX">
    <property type="method" value="X-ray"/>
    <property type="resolution" value="3.01 A"/>
    <property type="chains" value="M=2-308"/>
</dbReference>
<dbReference type="PDB" id="1JGY">
    <property type="method" value="X-ray"/>
    <property type="resolution" value="2.70 A"/>
    <property type="chains" value="M=2-308"/>
</dbReference>
<dbReference type="PDB" id="1JGZ">
    <property type="method" value="X-ray"/>
    <property type="resolution" value="2.70 A"/>
    <property type="chains" value="M=2-308"/>
</dbReference>
<dbReference type="PDB" id="1JH0">
    <property type="method" value="X-ray"/>
    <property type="resolution" value="3.50 A"/>
    <property type="chains" value="M=2-308"/>
</dbReference>
<dbReference type="PDB" id="1K6L">
    <property type="method" value="X-ray"/>
    <property type="resolution" value="3.10 A"/>
    <property type="chains" value="M=2-308"/>
</dbReference>
<dbReference type="PDB" id="1K6N">
    <property type="method" value="X-ray"/>
    <property type="resolution" value="3.10 A"/>
    <property type="chains" value="M=2-308"/>
</dbReference>
<dbReference type="PDB" id="1KBY">
    <property type="method" value="X-ray"/>
    <property type="resolution" value="2.50 A"/>
    <property type="chains" value="M=2-308"/>
</dbReference>
<dbReference type="PDB" id="1L9B">
    <property type="method" value="X-ray"/>
    <property type="resolution" value="2.40 A"/>
    <property type="chains" value="M=2-308"/>
</dbReference>
<dbReference type="PDB" id="1L9J">
    <property type="method" value="X-ray"/>
    <property type="resolution" value="3.25 A"/>
    <property type="chains" value="M/S=2-308"/>
</dbReference>
<dbReference type="PDB" id="1M3X">
    <property type="method" value="X-ray"/>
    <property type="resolution" value="2.55 A"/>
    <property type="chains" value="M=2-308"/>
</dbReference>
<dbReference type="PDB" id="1MPS">
    <property type="method" value="X-ray"/>
    <property type="resolution" value="2.55 A"/>
    <property type="chains" value="M=2-308"/>
</dbReference>
<dbReference type="PDB" id="1OGV">
    <property type="method" value="X-ray"/>
    <property type="resolution" value="2.35 A"/>
    <property type="chains" value="M=2-308"/>
</dbReference>
<dbReference type="PDB" id="1PCR">
    <property type="method" value="X-ray"/>
    <property type="resolution" value="2.65 A"/>
    <property type="chains" value="M=2-308"/>
</dbReference>
<dbReference type="PDB" id="1PSS">
    <property type="method" value="X-ray"/>
    <property type="resolution" value="3.00 A"/>
    <property type="chains" value="M=7-302"/>
</dbReference>
<dbReference type="PDB" id="1PST">
    <property type="method" value="X-ray"/>
    <property type="resolution" value="3.00 A"/>
    <property type="chains" value="M=7-302"/>
</dbReference>
<dbReference type="PDB" id="1QOV">
    <property type="method" value="X-ray"/>
    <property type="resolution" value="2.10 A"/>
    <property type="chains" value="M=2-308"/>
</dbReference>
<dbReference type="PDB" id="1RG5">
    <property type="method" value="X-ray"/>
    <property type="resolution" value="2.50 A"/>
    <property type="chains" value="M=2-308"/>
</dbReference>
<dbReference type="PDB" id="1RGN">
    <property type="method" value="X-ray"/>
    <property type="resolution" value="2.80 A"/>
    <property type="chains" value="M=2-308"/>
</dbReference>
<dbReference type="PDB" id="1RQK">
    <property type="method" value="X-ray"/>
    <property type="resolution" value="2.70 A"/>
    <property type="chains" value="M=2-308"/>
</dbReference>
<dbReference type="PDB" id="1RVJ">
    <property type="method" value="X-ray"/>
    <property type="resolution" value="2.75 A"/>
    <property type="chains" value="M=2-307"/>
</dbReference>
<dbReference type="PDB" id="1RY5">
    <property type="method" value="X-ray"/>
    <property type="resolution" value="2.10 A"/>
    <property type="chains" value="M=2-308"/>
</dbReference>
<dbReference type="PDB" id="1RZH">
    <property type="method" value="X-ray"/>
    <property type="resolution" value="1.80 A"/>
    <property type="chains" value="M=2-308"/>
</dbReference>
<dbReference type="PDB" id="1RZZ">
    <property type="method" value="X-ray"/>
    <property type="resolution" value="2.40 A"/>
    <property type="chains" value="M/S=2-308"/>
</dbReference>
<dbReference type="PDB" id="1S00">
    <property type="method" value="X-ray"/>
    <property type="resolution" value="2.60 A"/>
    <property type="chains" value="M/S=2-308"/>
</dbReference>
<dbReference type="PDB" id="1UMX">
    <property type="method" value="X-ray"/>
    <property type="resolution" value="2.80 A"/>
    <property type="chains" value="M=2-308"/>
</dbReference>
<dbReference type="PDB" id="1YF6">
    <property type="method" value="X-ray"/>
    <property type="resolution" value="2.25 A"/>
    <property type="chains" value="M=2-308"/>
</dbReference>
<dbReference type="PDB" id="1YST">
    <property type="method" value="X-ray"/>
    <property type="resolution" value="3.00 A"/>
    <property type="chains" value="M=2-306"/>
</dbReference>
<dbReference type="PDB" id="1Z9J">
    <property type="method" value="X-ray"/>
    <property type="resolution" value="4.50 A"/>
    <property type="chains" value="B=2-308"/>
</dbReference>
<dbReference type="PDB" id="1Z9K">
    <property type="method" value="X-ray"/>
    <property type="resolution" value="4.60 A"/>
    <property type="chains" value="B=2-308"/>
</dbReference>
<dbReference type="PDB" id="2BNP">
    <property type="method" value="X-ray"/>
    <property type="resolution" value="2.70 A"/>
    <property type="chains" value="B=2-308"/>
</dbReference>
<dbReference type="PDB" id="2BNS">
    <property type="method" value="X-ray"/>
    <property type="resolution" value="2.50 A"/>
    <property type="chains" value="B=2-308"/>
</dbReference>
<dbReference type="PDB" id="2BOZ">
    <property type="method" value="X-ray"/>
    <property type="resolution" value="2.40 A"/>
    <property type="chains" value="M=2-308"/>
</dbReference>
<dbReference type="PDB" id="2GMR">
    <property type="method" value="X-ray"/>
    <property type="resolution" value="2.50 A"/>
    <property type="chains" value="M=2-308"/>
</dbReference>
<dbReference type="PDB" id="2GNU">
    <property type="method" value="X-ray"/>
    <property type="resolution" value="2.20 A"/>
    <property type="chains" value="M=3-302"/>
</dbReference>
<dbReference type="PDB" id="2HG3">
    <property type="method" value="X-ray"/>
    <property type="resolution" value="2.70 A"/>
    <property type="chains" value="M=2-308"/>
</dbReference>
<dbReference type="PDB" id="2HG9">
    <property type="method" value="X-ray"/>
    <property type="resolution" value="2.45 A"/>
    <property type="chains" value="M=2-308"/>
</dbReference>
<dbReference type="PDB" id="2HH1">
    <property type="method" value="X-ray"/>
    <property type="resolution" value="2.55 A"/>
    <property type="chains" value="M=2-308"/>
</dbReference>
<dbReference type="PDB" id="2HHK">
    <property type="method" value="X-ray"/>
    <property type="resolution" value="2.50 A"/>
    <property type="chains" value="M=2-308"/>
</dbReference>
<dbReference type="PDB" id="2HIT">
    <property type="method" value="X-ray"/>
    <property type="resolution" value="2.75 A"/>
    <property type="chains" value="M=2-308"/>
</dbReference>
<dbReference type="PDB" id="2HJ6">
    <property type="method" value="X-ray"/>
    <property type="resolution" value="3.00 A"/>
    <property type="chains" value="M=2-308"/>
</dbReference>
<dbReference type="PDB" id="2J8C">
    <property type="method" value="X-ray"/>
    <property type="resolution" value="1.87 A"/>
    <property type="chains" value="M=2-308"/>
</dbReference>
<dbReference type="PDB" id="2J8D">
    <property type="method" value="X-ray"/>
    <property type="resolution" value="2.07 A"/>
    <property type="chains" value="M=2-308"/>
</dbReference>
<dbReference type="PDB" id="2JIY">
    <property type="method" value="X-ray"/>
    <property type="resolution" value="2.20 A"/>
    <property type="chains" value="M=1-308"/>
</dbReference>
<dbReference type="PDB" id="2JJ0">
    <property type="method" value="X-ray"/>
    <property type="resolution" value="2.80 A"/>
    <property type="chains" value="M=2-308"/>
</dbReference>
<dbReference type="PDB" id="2RCR">
    <property type="method" value="X-ray"/>
    <property type="resolution" value="3.10 A"/>
    <property type="chains" value="M=2-308"/>
</dbReference>
<dbReference type="PDB" id="2UWS">
    <property type="method" value="X-ray"/>
    <property type="resolution" value="2.90 A"/>
    <property type="chains" value="M=2-308"/>
</dbReference>
<dbReference type="PDB" id="2UWT">
    <property type="method" value="X-ray"/>
    <property type="resolution" value="2.50 A"/>
    <property type="chains" value="M=2-308"/>
</dbReference>
<dbReference type="PDB" id="2UWU">
    <property type="method" value="X-ray"/>
    <property type="resolution" value="2.04 A"/>
    <property type="chains" value="M=2-308"/>
</dbReference>
<dbReference type="PDB" id="2UWV">
    <property type="method" value="X-ray"/>
    <property type="resolution" value="2.13 A"/>
    <property type="chains" value="M=2-308"/>
</dbReference>
<dbReference type="PDB" id="2UWW">
    <property type="method" value="X-ray"/>
    <property type="resolution" value="2.05 A"/>
    <property type="chains" value="M=2-308"/>
</dbReference>
<dbReference type="PDB" id="2UX3">
    <property type="method" value="X-ray"/>
    <property type="resolution" value="2.50 A"/>
    <property type="chains" value="M=2-308"/>
</dbReference>
<dbReference type="PDB" id="2UX4">
    <property type="method" value="X-ray"/>
    <property type="resolution" value="2.51 A"/>
    <property type="chains" value="M=2-308"/>
</dbReference>
<dbReference type="PDB" id="2UX5">
    <property type="method" value="X-ray"/>
    <property type="resolution" value="2.21 A"/>
    <property type="chains" value="M=2-308"/>
</dbReference>
<dbReference type="PDB" id="2UXJ">
    <property type="method" value="X-ray"/>
    <property type="resolution" value="2.25 A"/>
    <property type="chains" value="M=2-308"/>
</dbReference>
<dbReference type="PDB" id="2UXK">
    <property type="method" value="X-ray"/>
    <property type="resolution" value="2.31 A"/>
    <property type="chains" value="M=2-308"/>
</dbReference>
<dbReference type="PDB" id="2UXL">
    <property type="method" value="X-ray"/>
    <property type="resolution" value="2.88 A"/>
    <property type="chains" value="M=2-308"/>
</dbReference>
<dbReference type="PDB" id="2UXM">
    <property type="method" value="X-ray"/>
    <property type="resolution" value="2.70 A"/>
    <property type="chains" value="M=2-308"/>
</dbReference>
<dbReference type="PDB" id="3DSY">
    <property type="method" value="X-ray"/>
    <property type="resolution" value="3.00 A"/>
    <property type="chains" value="M=2-308"/>
</dbReference>
<dbReference type="PDB" id="3DTA">
    <property type="method" value="X-ray"/>
    <property type="resolution" value="3.20 A"/>
    <property type="chains" value="M=2-308"/>
</dbReference>
<dbReference type="PDB" id="3DTR">
    <property type="method" value="X-ray"/>
    <property type="resolution" value="3.10 A"/>
    <property type="chains" value="M=2-308"/>
</dbReference>
<dbReference type="PDB" id="3DTS">
    <property type="method" value="X-ray"/>
    <property type="resolution" value="3.10 A"/>
    <property type="chains" value="M=2-308"/>
</dbReference>
<dbReference type="PDB" id="3DU2">
    <property type="method" value="X-ray"/>
    <property type="resolution" value="3.10 A"/>
    <property type="chains" value="M=2-308"/>
</dbReference>
<dbReference type="PDB" id="3DU3">
    <property type="method" value="X-ray"/>
    <property type="resolution" value="2.80 A"/>
    <property type="chains" value="M=2-308"/>
</dbReference>
<dbReference type="PDB" id="3DUQ">
    <property type="method" value="X-ray"/>
    <property type="resolution" value="2.70 A"/>
    <property type="chains" value="M=2-308"/>
</dbReference>
<dbReference type="PDB" id="3I4D">
    <property type="method" value="X-ray"/>
    <property type="resolution" value="2.01 A"/>
    <property type="chains" value="M=2-308"/>
</dbReference>
<dbReference type="PDB" id="3V3Y">
    <property type="method" value="X-ray"/>
    <property type="resolution" value="2.80 A"/>
    <property type="chains" value="M=2-303"/>
</dbReference>
<dbReference type="PDB" id="3V3Z">
    <property type="method" value="X-ray"/>
    <property type="resolution" value="2.90 A"/>
    <property type="chains" value="M=2-303"/>
</dbReference>
<dbReference type="PDB" id="3ZUM">
    <property type="method" value="X-ray"/>
    <property type="resolution" value="2.50 A"/>
    <property type="chains" value="M=2-308"/>
</dbReference>
<dbReference type="PDB" id="3ZUW">
    <property type="method" value="X-ray"/>
    <property type="resolution" value="2.31 A"/>
    <property type="chains" value="M=2-308"/>
</dbReference>
<dbReference type="PDB" id="4H99">
    <property type="method" value="X-ray"/>
    <property type="resolution" value="2.97 A"/>
    <property type="chains" value="M=2-303"/>
</dbReference>
<dbReference type="PDB" id="4H9L">
    <property type="method" value="X-ray"/>
    <property type="resolution" value="2.77 A"/>
    <property type="chains" value="M=2-303"/>
</dbReference>
<dbReference type="PDB" id="4HBH">
    <property type="method" value="X-ray"/>
    <property type="resolution" value="2.93 A"/>
    <property type="chains" value="M=2-303"/>
</dbReference>
<dbReference type="PDB" id="4HBJ">
    <property type="method" value="X-ray"/>
    <property type="resolution" value="2.74 A"/>
    <property type="chains" value="M=2-303"/>
</dbReference>
<dbReference type="PDB" id="4IN7">
    <property type="method" value="X-ray"/>
    <property type="resolution" value="2.85 A"/>
    <property type="chains" value="M=2-303"/>
</dbReference>
<dbReference type="PDB" id="4LWY">
    <property type="method" value="X-ray"/>
    <property type="resolution" value="2.90 A"/>
    <property type="chains" value="M=1-303"/>
</dbReference>
<dbReference type="PDB" id="4N7K">
    <property type="method" value="X-ray"/>
    <property type="resolution" value="2.85 A"/>
    <property type="chains" value="M=2-304"/>
</dbReference>
<dbReference type="PDB" id="4RCR">
    <property type="method" value="X-ray"/>
    <property type="resolution" value="2.80 A"/>
    <property type="chains" value="M=2-308"/>
</dbReference>
<dbReference type="PDB" id="4TQQ">
    <property type="method" value="X-ray"/>
    <property type="resolution" value="2.50 A"/>
    <property type="chains" value="M=2-303"/>
</dbReference>
<dbReference type="PDB" id="4V9G">
    <property type="method" value="X-ray"/>
    <property type="resolution" value="7.78 A"/>
    <property type="chains" value="AM/BM=1-308"/>
</dbReference>
<dbReference type="PDB" id="5LSE">
    <property type="method" value="X-ray"/>
    <property type="resolution" value="2.50 A"/>
    <property type="chains" value="M=2-308"/>
</dbReference>
<dbReference type="PDB" id="5V33">
    <property type="method" value="X-ray"/>
    <property type="resolution" value="3.49 A"/>
    <property type="chains" value="M=2-303"/>
</dbReference>
<dbReference type="PDB" id="6Z02">
    <property type="method" value="X-ray"/>
    <property type="resolution" value="2.10 A"/>
    <property type="chains" value="M=2-303"/>
</dbReference>
<dbReference type="PDB" id="6Z1J">
    <property type="method" value="X-ray"/>
    <property type="resolution" value="2.10 A"/>
    <property type="chains" value="M=2-303"/>
</dbReference>
<dbReference type="PDB" id="6Z27">
    <property type="method" value="X-ray"/>
    <property type="resolution" value="2.10 A"/>
    <property type="chains" value="M=2-303"/>
</dbReference>
<dbReference type="PDB" id="7MH3">
    <property type="method" value="X-ray"/>
    <property type="resolution" value="2.30 A"/>
    <property type="chains" value="M=1-308"/>
</dbReference>
<dbReference type="PDB" id="7MH4">
    <property type="method" value="X-ray"/>
    <property type="resolution" value="2.48 A"/>
    <property type="chains" value="M=1-308"/>
</dbReference>
<dbReference type="PDB" id="7MH5">
    <property type="method" value="X-ray"/>
    <property type="resolution" value="2.85 A"/>
    <property type="chains" value="M=1-308"/>
</dbReference>
<dbReference type="PDB" id="7MH8">
    <property type="method" value="X-ray"/>
    <property type="resolution" value="2.75 A"/>
    <property type="chains" value="M=1-308"/>
</dbReference>
<dbReference type="PDB" id="7MH9">
    <property type="method" value="X-ray"/>
    <property type="resolution" value="3.10 A"/>
    <property type="chains" value="M=1-308"/>
</dbReference>
<dbReference type="PDB" id="7MHA">
    <property type="method" value="X-ray"/>
    <property type="resolution" value="2.79 A"/>
    <property type="chains" value="M=1-308"/>
</dbReference>
<dbReference type="PDB" id="7OD5">
    <property type="method" value="X-ray"/>
    <property type="resolution" value="2.10 A"/>
    <property type="chains" value="M=2-304"/>
</dbReference>
<dbReference type="PDB" id="7P0Q">
    <property type="method" value="X-ray"/>
    <property type="resolution" value="1.73 A"/>
    <property type="chains" value="M=2-304"/>
</dbReference>
<dbReference type="PDB" id="7P17">
    <property type="method" value="X-ray"/>
    <property type="resolution" value="2.22 A"/>
    <property type="chains" value="M=2-304"/>
</dbReference>
<dbReference type="PDB" id="7Q7F">
    <property type="method" value="X-ray"/>
    <property type="resolution" value="2.75 A"/>
    <property type="chains" value="M=2-303"/>
</dbReference>
<dbReference type="PDB" id="7Q7G">
    <property type="method" value="X-ray"/>
    <property type="resolution" value="2.69 A"/>
    <property type="chains" value="M=2-303"/>
</dbReference>
<dbReference type="PDB" id="7Q7H">
    <property type="method" value="X-ray"/>
    <property type="resolution" value="2.49 A"/>
    <property type="chains" value="M=2-303"/>
</dbReference>
<dbReference type="PDB" id="7Q7J">
    <property type="method" value="X-ray"/>
    <property type="resolution" value="2.69 A"/>
    <property type="chains" value="M=2-303"/>
</dbReference>
<dbReference type="PDB" id="7Q7M">
    <property type="method" value="X-ray"/>
    <property type="resolution" value="2.55 A"/>
    <property type="chains" value="M=2-303"/>
</dbReference>
<dbReference type="PDB" id="7Q7N">
    <property type="method" value="X-ray"/>
    <property type="resolution" value="2.87 A"/>
    <property type="chains" value="M=2-303"/>
</dbReference>
<dbReference type="PDB" id="7Q7O">
    <property type="method" value="X-ray"/>
    <property type="resolution" value="2.65 A"/>
    <property type="chains" value="M=2-303"/>
</dbReference>
<dbReference type="PDB" id="7Z8D">
    <property type="method" value="X-ray"/>
    <property type="resolution" value="2.14 A"/>
    <property type="chains" value="M=2-303"/>
</dbReference>
<dbReference type="PDB" id="8C3F">
    <property type="method" value="X-ray"/>
    <property type="resolution" value="2.60 A"/>
    <property type="chains" value="M=2-304"/>
</dbReference>
<dbReference type="PDB" id="8C5X">
    <property type="method" value="X-ray"/>
    <property type="resolution" value="2.60 A"/>
    <property type="chains" value="M=2-304"/>
</dbReference>
<dbReference type="PDB" id="8C6K">
    <property type="method" value="X-ray"/>
    <property type="resolution" value="2.86 A"/>
    <property type="chains" value="M=2-304"/>
</dbReference>
<dbReference type="PDB" id="8C7C">
    <property type="method" value="X-ray"/>
    <property type="resolution" value="2.60 A"/>
    <property type="chains" value="M=2-304"/>
</dbReference>
<dbReference type="PDB" id="8C87">
    <property type="method" value="X-ray"/>
    <property type="resolution" value="2.45 A"/>
    <property type="chains" value="M=2-304"/>
</dbReference>
<dbReference type="PDB" id="8C88">
    <property type="method" value="X-ray"/>
    <property type="resolution" value="2.75 A"/>
    <property type="chains" value="M=2-304"/>
</dbReference>
<dbReference type="PDB" id="8VTJ">
    <property type="method" value="X-ray"/>
    <property type="resolution" value="2.81 A"/>
    <property type="chains" value="M=3-303"/>
</dbReference>
<dbReference type="PDB" id="8VTK">
    <property type="method" value="X-ray"/>
    <property type="resolution" value="3.07 A"/>
    <property type="chains" value="M=3-303"/>
</dbReference>
<dbReference type="PDB" id="8VTL">
    <property type="method" value="X-ray"/>
    <property type="resolution" value="3.05 A"/>
    <property type="chains" value="M=3-303"/>
</dbReference>
<dbReference type="PDB" id="8VTM">
    <property type="method" value="X-ray"/>
    <property type="resolution" value="3.51 A"/>
    <property type="chains" value="M=3-303"/>
</dbReference>
<dbReference type="PDB" id="8VTN">
    <property type="method" value="X-ray"/>
    <property type="resolution" value="3.57 A"/>
    <property type="chains" value="M=3-303"/>
</dbReference>
<dbReference type="PDB" id="8VTO">
    <property type="method" value="X-ray"/>
    <property type="resolution" value="3.09 A"/>
    <property type="chains" value="M=3-303"/>
</dbReference>
<dbReference type="PDBsum" id="1AIG"/>
<dbReference type="PDBsum" id="1AIJ"/>
<dbReference type="PDBsum" id="1DS8"/>
<dbReference type="PDBsum" id="1DV3"/>
<dbReference type="PDBsum" id="1DV6"/>
<dbReference type="PDBsum" id="1E14"/>
<dbReference type="PDBsum" id="1E6D"/>
<dbReference type="PDBsum" id="1F6N"/>
<dbReference type="PDBsum" id="1FNP"/>
<dbReference type="PDBsum" id="1FNQ"/>
<dbReference type="PDBsum" id="1JGW"/>
<dbReference type="PDBsum" id="1JGX"/>
<dbReference type="PDBsum" id="1JGY"/>
<dbReference type="PDBsum" id="1JGZ"/>
<dbReference type="PDBsum" id="1JH0"/>
<dbReference type="PDBsum" id="1K6L"/>
<dbReference type="PDBsum" id="1K6N"/>
<dbReference type="PDBsum" id="1KBY"/>
<dbReference type="PDBsum" id="1L9B"/>
<dbReference type="PDBsum" id="1L9J"/>
<dbReference type="PDBsum" id="1M3X"/>
<dbReference type="PDBsum" id="1MPS"/>
<dbReference type="PDBsum" id="1OGV"/>
<dbReference type="PDBsum" id="1PCR"/>
<dbReference type="PDBsum" id="1PSS"/>
<dbReference type="PDBsum" id="1PST"/>
<dbReference type="PDBsum" id="1QOV"/>
<dbReference type="PDBsum" id="1RG5"/>
<dbReference type="PDBsum" id="1RGN"/>
<dbReference type="PDBsum" id="1RQK"/>
<dbReference type="PDBsum" id="1RVJ"/>
<dbReference type="PDBsum" id="1RY5"/>
<dbReference type="PDBsum" id="1RZH"/>
<dbReference type="PDBsum" id="1RZZ"/>
<dbReference type="PDBsum" id="1S00"/>
<dbReference type="PDBsum" id="1UMX"/>
<dbReference type="PDBsum" id="1YF6"/>
<dbReference type="PDBsum" id="1YST"/>
<dbReference type="PDBsum" id="1Z9J"/>
<dbReference type="PDBsum" id="1Z9K"/>
<dbReference type="PDBsum" id="2BNP"/>
<dbReference type="PDBsum" id="2BNS"/>
<dbReference type="PDBsum" id="2BOZ"/>
<dbReference type="PDBsum" id="2GMR"/>
<dbReference type="PDBsum" id="2GNU"/>
<dbReference type="PDBsum" id="2HG3"/>
<dbReference type="PDBsum" id="2HG9"/>
<dbReference type="PDBsum" id="2HH1"/>
<dbReference type="PDBsum" id="2HHK"/>
<dbReference type="PDBsum" id="2HIT"/>
<dbReference type="PDBsum" id="2HJ6"/>
<dbReference type="PDBsum" id="2J8C"/>
<dbReference type="PDBsum" id="2J8D"/>
<dbReference type="PDBsum" id="2JIY"/>
<dbReference type="PDBsum" id="2JJ0"/>
<dbReference type="PDBsum" id="2RCR"/>
<dbReference type="PDBsum" id="2UWS"/>
<dbReference type="PDBsum" id="2UWT"/>
<dbReference type="PDBsum" id="2UWU"/>
<dbReference type="PDBsum" id="2UWV"/>
<dbReference type="PDBsum" id="2UWW"/>
<dbReference type="PDBsum" id="2UX3"/>
<dbReference type="PDBsum" id="2UX4"/>
<dbReference type="PDBsum" id="2UX5"/>
<dbReference type="PDBsum" id="2UXJ"/>
<dbReference type="PDBsum" id="2UXK"/>
<dbReference type="PDBsum" id="2UXL"/>
<dbReference type="PDBsum" id="2UXM"/>
<dbReference type="PDBsum" id="3DSY"/>
<dbReference type="PDBsum" id="3DTA"/>
<dbReference type="PDBsum" id="3DTR"/>
<dbReference type="PDBsum" id="3DTS"/>
<dbReference type="PDBsum" id="3DU2"/>
<dbReference type="PDBsum" id="3DU3"/>
<dbReference type="PDBsum" id="3DUQ"/>
<dbReference type="PDBsum" id="3I4D"/>
<dbReference type="PDBsum" id="3V3Y"/>
<dbReference type="PDBsum" id="3V3Z"/>
<dbReference type="PDBsum" id="3ZUM"/>
<dbReference type="PDBsum" id="3ZUW"/>
<dbReference type="PDBsum" id="4H99"/>
<dbReference type="PDBsum" id="4H9L"/>
<dbReference type="PDBsum" id="4HBH"/>
<dbReference type="PDBsum" id="4HBJ"/>
<dbReference type="PDBsum" id="4IN7"/>
<dbReference type="PDBsum" id="4LWY"/>
<dbReference type="PDBsum" id="4N7K"/>
<dbReference type="PDBsum" id="4RCR"/>
<dbReference type="PDBsum" id="4TQQ"/>
<dbReference type="PDBsum" id="4V9G"/>
<dbReference type="PDBsum" id="5LSE"/>
<dbReference type="PDBsum" id="5V33"/>
<dbReference type="PDBsum" id="6Z02"/>
<dbReference type="PDBsum" id="6Z1J"/>
<dbReference type="PDBsum" id="6Z27"/>
<dbReference type="PDBsum" id="7MH3"/>
<dbReference type="PDBsum" id="7MH4"/>
<dbReference type="PDBsum" id="7MH5"/>
<dbReference type="PDBsum" id="7MH8"/>
<dbReference type="PDBsum" id="7MH9"/>
<dbReference type="PDBsum" id="7MHA"/>
<dbReference type="PDBsum" id="7OD5"/>
<dbReference type="PDBsum" id="7P0Q"/>
<dbReference type="PDBsum" id="7P17"/>
<dbReference type="PDBsum" id="7Q7F"/>
<dbReference type="PDBsum" id="7Q7G"/>
<dbReference type="PDBsum" id="7Q7H"/>
<dbReference type="PDBsum" id="7Q7J"/>
<dbReference type="PDBsum" id="7Q7M"/>
<dbReference type="PDBsum" id="7Q7N"/>
<dbReference type="PDBsum" id="7Q7O"/>
<dbReference type="PDBsum" id="7Z8D"/>
<dbReference type="PDBsum" id="8C3F"/>
<dbReference type="PDBsum" id="8C5X"/>
<dbReference type="PDBsum" id="8C6K"/>
<dbReference type="PDBsum" id="8C7C"/>
<dbReference type="PDBsum" id="8C87"/>
<dbReference type="PDBsum" id="8C88"/>
<dbReference type="PDBsum" id="8VTJ"/>
<dbReference type="PDBsum" id="8VTK"/>
<dbReference type="PDBsum" id="8VTL"/>
<dbReference type="PDBsum" id="8VTM"/>
<dbReference type="PDBsum" id="8VTN"/>
<dbReference type="PDBsum" id="8VTO"/>
<dbReference type="SMR" id="P0C0Y9"/>
<dbReference type="DIP" id="DIP-60490N"/>
<dbReference type="IntAct" id="P0C0Y9">
    <property type="interactions" value="1"/>
</dbReference>
<dbReference type="DrugBank" id="DB04147">
    <property type="generic name" value="Dodecyldimethylamine N-oxide"/>
</dbReference>
<dbReference type="DrugBank" id="DB08215">
    <property type="generic name" value="Terbutryn"/>
</dbReference>
<dbReference type="DrugBank" id="DB08690">
    <property type="generic name" value="Ubiquinone Q2"/>
</dbReference>
<dbReference type="TCDB" id="3.E.2.1.1">
    <property type="family name" value="the photosynthetic reaction center (prc) family"/>
</dbReference>
<dbReference type="GeneID" id="67446989"/>
<dbReference type="OMA" id="IFPHLDW"/>
<dbReference type="EvolutionaryTrace" id="P0C0Y9"/>
<dbReference type="GO" id="GO:0030077">
    <property type="term" value="C:plasma membrane light-harvesting complex"/>
    <property type="evidence" value="ECO:0007669"/>
    <property type="project" value="InterPro"/>
</dbReference>
<dbReference type="GO" id="GO:0042717">
    <property type="term" value="C:plasma membrane-derived chromatophore membrane"/>
    <property type="evidence" value="ECO:0007669"/>
    <property type="project" value="UniProtKB-SubCell"/>
</dbReference>
<dbReference type="GO" id="GO:0042314">
    <property type="term" value="F:bacteriochlorophyll binding"/>
    <property type="evidence" value="ECO:0007669"/>
    <property type="project" value="UniProtKB-KW"/>
</dbReference>
<dbReference type="GO" id="GO:0045156">
    <property type="term" value="F:electron transporter, transferring electrons within the cyclic electron transport pathway of photosynthesis activity"/>
    <property type="evidence" value="ECO:0007669"/>
    <property type="project" value="InterPro"/>
</dbReference>
<dbReference type="GO" id="GO:0046872">
    <property type="term" value="F:metal ion binding"/>
    <property type="evidence" value="ECO:0007669"/>
    <property type="project" value="UniProtKB-KW"/>
</dbReference>
<dbReference type="GO" id="GO:0009772">
    <property type="term" value="P:photosynthetic electron transport in photosystem II"/>
    <property type="evidence" value="ECO:0007669"/>
    <property type="project" value="InterPro"/>
</dbReference>
<dbReference type="CDD" id="cd09291">
    <property type="entry name" value="Photo-RC_M"/>
    <property type="match status" value="1"/>
</dbReference>
<dbReference type="Gene3D" id="1.20.85.10">
    <property type="entry name" value="Photosystem II protein D1-like"/>
    <property type="match status" value="2"/>
</dbReference>
<dbReference type="InterPro" id="IPR036854">
    <property type="entry name" value="Photo_II_D1/D2_sf"/>
</dbReference>
<dbReference type="InterPro" id="IPR000484">
    <property type="entry name" value="Photo_RC_L/M"/>
</dbReference>
<dbReference type="InterPro" id="IPR055265">
    <property type="entry name" value="Photo_RC_L/M_CS"/>
</dbReference>
<dbReference type="InterPro" id="IPR005781">
    <property type="entry name" value="Photo_RC_M"/>
</dbReference>
<dbReference type="NCBIfam" id="TIGR01115">
    <property type="entry name" value="pufM"/>
    <property type="match status" value="1"/>
</dbReference>
<dbReference type="Pfam" id="PF00124">
    <property type="entry name" value="Photo_RC"/>
    <property type="match status" value="1"/>
</dbReference>
<dbReference type="PRINTS" id="PR00256">
    <property type="entry name" value="REACTNCENTRE"/>
</dbReference>
<dbReference type="SUPFAM" id="SSF81483">
    <property type="entry name" value="Bacterial photosystem II reaction centre, L and M subunits"/>
    <property type="match status" value="1"/>
</dbReference>
<dbReference type="PROSITE" id="PS00244">
    <property type="entry name" value="REACTION_CENTER"/>
    <property type="match status" value="1"/>
</dbReference>
<reference key="1">
    <citation type="journal article" date="1983" name="Proc. Natl. Acad. Sci. U.S.A.">
        <title>Primary structure of the M subunit of the reaction center from Rhodopseudomonas sphaeroides.</title>
        <authorList>
            <person name="Williams J.C."/>
            <person name="Steiner L.A."/>
            <person name="Ogden R.C."/>
            <person name="Simon M.I."/>
            <person name="Feher G."/>
        </authorList>
    </citation>
    <scope>NUCLEOTIDE SEQUENCE [GENOMIC DNA]</scope>
</reference>
<reference key="2">
    <citation type="journal article" date="1990" name="Biochimie">
        <title>Towards the understanding of the function of Rb sphaeroides Y wild type reaction center: gene cloning, protein and detergent structures in the three-dimensional crystals.</title>
        <authorList>
            <person name="Arnoux B."/>
            <person name="Ducruix A."/>
            <person name="Astier C."/>
            <person name="Picaud M."/>
            <person name="Roth M."/>
            <person name="Reiss-Husson F."/>
        </authorList>
    </citation>
    <scope>NUCLEOTIDE SEQUENCE [GENOMIC DNA]</scope>
    <source>
        <strain>Y</strain>
    </source>
</reference>
<reference key="3">
    <citation type="journal article" date="1984" name="Proc. Natl. Acad. Sci. U.S.A.">
        <title>Primary structure of the L subunit of the reaction center from Rhodopseudomonas sphaeroides.</title>
        <authorList>
            <person name="Williams J.C."/>
            <person name="Steiner L.A."/>
            <person name="Feher G."/>
            <person name="Simon M.I."/>
        </authorList>
    </citation>
    <scope>NUCLEOTIDE SEQUENCE [GENOMIC DNA] OF 1-11</scope>
</reference>
<reference key="4">
    <citation type="journal article" date="1991" name="Biochemistry">
        <title>Structure of the membrane-bound protein photosynthetic reaction center from Rhodobacter sphaeroides.</title>
        <authorList>
            <person name="Chang C.-H."/>
            <person name="El-Kabbani O."/>
            <person name="Tiede D."/>
            <person name="Norris J."/>
            <person name="Schiffer M."/>
        </authorList>
    </citation>
    <scope>X-RAY CRYSTALLOGRAPHY (3.1 ANGSTROMS)</scope>
</reference>
<reference key="5">
    <citation type="journal article" date="1988" name="Proc. Natl. Acad. Sci. U.S.A.">
        <title>Structure of the reaction center from Rhodobacter sphaeroides R-26: protein-cofactor (quinones and Fe2+) interactions.</title>
        <authorList>
            <person name="Allen J.P."/>
            <person name="Feher G."/>
            <person name="Yeates T.O."/>
            <person name="Komiya H."/>
            <person name="Rees D.C."/>
        </authorList>
    </citation>
    <scope>X-RAY CRYSTALLOGRAPHY (2.8 ANGSTROMS)</scope>
    <source>
        <strain>R-26</strain>
    </source>
</reference>
<reference key="6">
    <citation type="journal article" date="1987" name="Proc. Natl. Acad. Sci. U.S.A.">
        <title>Structure of the reaction center from Rhodobacter sphaeroides R-26: the protein subunits.</title>
        <authorList>
            <person name="Allen J.P."/>
            <person name="Feher G."/>
            <person name="Yeates T.O."/>
            <person name="Komiya H."/>
            <person name="Rees D.C."/>
        </authorList>
    </citation>
    <scope>X-RAY CRYSTALLOGRAPHY (2.8 ANGSTROMS)</scope>
    <source>
        <strain>R-26</strain>
    </source>
</reference>
<reference key="7">
    <citation type="journal article" date="1998" name="Biochemistry">
        <title>Structural studies of wild-type and mutant reaction centers from an antenna-deficient strain of Rhodobacter sphaeroides: monitoring the optical properties of the complex from bacterial cell to crystal.</title>
        <authorList>
            <person name="McAuley-Hecht K.E."/>
            <person name="Fyfe P.K."/>
            <person name="Ridge J.P."/>
            <person name="Prince S.M."/>
            <person name="Hunter C.N."/>
            <person name="Isaacs N.W."/>
            <person name="Cogdell R.J."/>
            <person name="Jones M.R."/>
        </authorList>
    </citation>
    <scope>X-RAY CRYSTALLOGRAPHY (2.55 ANGSTROMS)</scope>
</reference>
<organism>
    <name type="scientific">Cereibacter sphaeroides</name>
    <name type="common">Rhodobacter sphaeroides</name>
    <dbReference type="NCBI Taxonomy" id="1063"/>
    <lineage>
        <taxon>Bacteria</taxon>
        <taxon>Pseudomonadati</taxon>
        <taxon>Pseudomonadota</taxon>
        <taxon>Alphaproteobacteria</taxon>
        <taxon>Rhodobacterales</taxon>
        <taxon>Paracoccaceae</taxon>
        <taxon>Cereibacter</taxon>
    </lineage>
</organism>
<name>RCEM_CERSP</name>
<gene>
    <name type="primary">pufM</name>
</gene>
<sequence length="308" mass="34509">MAEYQNIFSQVQVRGPADLGMTEDVNLANRSGVGPFSTLLGWFGNAQLGPIYLGSLGVLSLFSGLMWFFTIGIWFWYQAGWNPAVFLRDLFFFSLEPPAPEYGLSFAAPLKEGGLWLIASFFMFVAVWSWWGRTYLRAQALGMGKHTAWAFLSAIWLWMVLGFIRPILMGSWSEAVPYGIFSHLDWTNNFSLVHGNLFYNPFHGLSIAFLYGSALLFAMHGATILAVSRFGGERELEQIADRGTAAERAALFWRWTMGFNATMEGIHRWAIWMAVLVTLTGGIGILLSGTVVDNWYVWGQNHGMAPLN</sequence>
<evidence type="ECO:0000305" key="1"/>
<evidence type="ECO:0007829" key="2">
    <source>
        <dbReference type="PDB" id="1PSS"/>
    </source>
</evidence>
<evidence type="ECO:0007829" key="3">
    <source>
        <dbReference type="PDB" id="1YST"/>
    </source>
</evidence>
<evidence type="ECO:0007829" key="4">
    <source>
        <dbReference type="PDB" id="2J8D"/>
    </source>
</evidence>
<evidence type="ECO:0007829" key="5">
    <source>
        <dbReference type="PDB" id="2RCR"/>
    </source>
</evidence>
<evidence type="ECO:0007829" key="6">
    <source>
        <dbReference type="PDB" id="3V3Y"/>
    </source>
</evidence>
<evidence type="ECO:0007829" key="7">
    <source>
        <dbReference type="PDB" id="7P0Q"/>
    </source>
</evidence>
<proteinExistence type="evidence at protein level"/>
<comment type="function">
    <text>The reaction center is a membrane-bound complex that mediates the initial photochemical event in the electron transfer process of photosynthesis.</text>
</comment>
<comment type="subunit">
    <text>Reaction center is composed of four bacteriochlorophylls, two bacteriopheophytins, two ubiquinones, one iron, and three highly hydrophobic polypeptide chains (designated L, M, and H).</text>
</comment>
<comment type="subcellular location">
    <subcellularLocation>
        <location>Cellular chromatophore membrane</location>
        <topology>Multi-pass membrane protein</topology>
    </subcellularLocation>
</comment>
<comment type="similarity">
    <text evidence="1">Belongs to the reaction center PufL/M/PsbA/D family.</text>
</comment>
<feature type="initiator methionine" description="Removed">
    <location>
        <position position="1"/>
    </location>
</feature>
<feature type="chain" id="PRO_0000090417" description="Reaction center protein M chain">
    <location>
        <begin position="2"/>
        <end position="308"/>
    </location>
</feature>
<feature type="transmembrane region" description="Helical">
    <location>
        <begin position="54"/>
        <end position="80"/>
    </location>
</feature>
<feature type="transmembrane region" description="Helical">
    <location>
        <begin position="111"/>
        <end position="140"/>
    </location>
</feature>
<feature type="transmembrane region" description="Helical">
    <location>
        <begin position="143"/>
        <end position="168"/>
    </location>
</feature>
<feature type="transmembrane region" description="Helical">
    <location>
        <begin position="198"/>
        <end position="226"/>
    </location>
</feature>
<feature type="transmembrane region" description="Helical">
    <location>
        <begin position="260"/>
        <end position="286"/>
    </location>
</feature>
<feature type="binding site" description="axial binding residue">
    <location>
        <position position="183"/>
    </location>
    <ligand>
        <name>(7R,8Z)-bacteriochlorophyll b</name>
        <dbReference type="ChEBI" id="CHEBI:30034"/>
    </ligand>
    <ligandPart>
        <name>Mg</name>
        <dbReference type="ChEBI" id="CHEBI:25107"/>
    </ligandPart>
</feature>
<feature type="binding site" description="axial binding residue">
    <location>
        <position position="203"/>
    </location>
    <ligand>
        <name>(7R,8Z)-bacteriochlorophyll b</name>
        <dbReference type="ChEBI" id="CHEBI:30034"/>
    </ligand>
    <ligandPart>
        <name>Mg</name>
        <dbReference type="ChEBI" id="CHEBI:25107"/>
    </ligandPart>
</feature>
<feature type="binding site">
    <location>
        <position position="220"/>
    </location>
    <ligand>
        <name>Fe cation</name>
        <dbReference type="ChEBI" id="CHEBI:24875"/>
    </ligand>
</feature>
<feature type="binding site">
    <location>
        <position position="235"/>
    </location>
    <ligand>
        <name>Fe cation</name>
        <dbReference type="ChEBI" id="CHEBI:24875"/>
    </ligand>
</feature>
<feature type="binding site">
    <location>
        <position position="253"/>
    </location>
    <ligand>
        <name>a ubiquinone</name>
        <dbReference type="ChEBI" id="CHEBI:16389"/>
    </ligand>
</feature>
<feature type="binding site">
    <location>
        <position position="267"/>
    </location>
    <ligand>
        <name>Fe cation</name>
        <dbReference type="ChEBI" id="CHEBI:24875"/>
    </ligand>
</feature>
<feature type="sequence conflict" description="In Ref. 2; CAA45001." evidence="1" ref="2">
    <original>L</original>
    <variation>M</variation>
    <location>
        <position position="141"/>
    </location>
</feature>
<feature type="strand" evidence="7">
    <location>
        <begin position="6"/>
        <end position="8"/>
    </location>
</feature>
<feature type="strand" evidence="7">
    <location>
        <begin position="10"/>
        <end position="14"/>
    </location>
</feature>
<feature type="strand" evidence="2">
    <location>
        <begin position="24"/>
        <end position="26"/>
    </location>
</feature>
<feature type="helix" evidence="7">
    <location>
        <begin position="27"/>
        <end position="29"/>
    </location>
</feature>
<feature type="helix" evidence="7">
    <location>
        <begin position="38"/>
        <end position="41"/>
    </location>
</feature>
<feature type="strand" evidence="6">
    <location>
        <begin position="46"/>
        <end position="48"/>
    </location>
</feature>
<feature type="helix" evidence="7">
    <location>
        <begin position="54"/>
        <end position="78"/>
    </location>
</feature>
<feature type="turn" evidence="7">
    <location>
        <begin position="79"/>
        <end position="81"/>
    </location>
</feature>
<feature type="helix" evidence="7">
    <location>
        <begin position="83"/>
        <end position="88"/>
    </location>
</feature>
<feature type="turn" evidence="7">
    <location>
        <begin position="89"/>
        <end position="92"/>
    </location>
</feature>
<feature type="helix" evidence="7">
    <location>
        <begin position="100"/>
        <end position="102"/>
    </location>
</feature>
<feature type="strand" evidence="5">
    <location>
        <begin position="104"/>
        <end position="106"/>
    </location>
</feature>
<feature type="helix" evidence="7">
    <location>
        <begin position="110"/>
        <end position="112"/>
    </location>
</feature>
<feature type="helix" evidence="7">
    <location>
        <begin position="114"/>
        <end position="140"/>
    </location>
</feature>
<feature type="helix" evidence="7">
    <location>
        <begin position="146"/>
        <end position="162"/>
    </location>
</feature>
<feature type="helix" evidence="7">
    <location>
        <begin position="164"/>
        <end position="169"/>
    </location>
</feature>
<feature type="helix" evidence="7">
    <location>
        <begin position="172"/>
        <end position="174"/>
    </location>
</feature>
<feature type="helix" evidence="7">
    <location>
        <begin position="180"/>
        <end position="193"/>
    </location>
</feature>
<feature type="helix" evidence="7">
    <location>
        <begin position="197"/>
        <end position="199"/>
    </location>
</feature>
<feature type="helix" evidence="7">
    <location>
        <begin position="201"/>
        <end position="226"/>
    </location>
</feature>
<feature type="helix" evidence="7">
    <location>
        <begin position="228"/>
        <end position="230"/>
    </location>
</feature>
<feature type="turn" evidence="7">
    <location>
        <begin position="231"/>
        <end position="233"/>
    </location>
</feature>
<feature type="helix" evidence="7">
    <location>
        <begin position="235"/>
        <end position="240"/>
    </location>
</feature>
<feature type="helix" evidence="7">
    <location>
        <begin position="244"/>
        <end position="257"/>
    </location>
</feature>
<feature type="helix" evidence="7">
    <location>
        <begin position="265"/>
        <end position="286"/>
    </location>
</feature>
<feature type="turn" evidence="7">
    <location>
        <begin position="289"/>
        <end position="291"/>
    </location>
</feature>
<feature type="strand" evidence="3">
    <location>
        <begin position="292"/>
        <end position="294"/>
    </location>
</feature>
<feature type="helix" evidence="7">
    <location>
        <begin position="295"/>
        <end position="300"/>
    </location>
</feature>
<feature type="strand" evidence="4">
    <location>
        <begin position="302"/>
        <end position="306"/>
    </location>
</feature>